<organism>
    <name type="scientific">Candida glabrata (strain ATCC 2001 / BCRC 20586 / JCM 3761 / NBRC 0622 / NRRL Y-65 / CBS 138)</name>
    <name type="common">Yeast</name>
    <name type="synonym">Nakaseomyces glabratus</name>
    <dbReference type="NCBI Taxonomy" id="284593"/>
    <lineage>
        <taxon>Eukaryota</taxon>
        <taxon>Fungi</taxon>
        <taxon>Dikarya</taxon>
        <taxon>Ascomycota</taxon>
        <taxon>Saccharomycotina</taxon>
        <taxon>Saccharomycetes</taxon>
        <taxon>Saccharomycetales</taxon>
        <taxon>Saccharomycetaceae</taxon>
        <taxon>Nakaseomyces</taxon>
    </lineage>
</organism>
<proteinExistence type="inferred from homology"/>
<protein>
    <recommendedName>
        <fullName>Topoisomerase I damage affected protein 11</fullName>
    </recommendedName>
</protein>
<keyword id="KW-0175">Coiled coil</keyword>
<keyword id="KW-0963">Cytoplasm</keyword>
<keyword id="KW-1185">Reference proteome</keyword>
<name>TDA11_CANGA</name>
<sequence>MDQKFDEFIAQTESEAEIDTSSRYTTGSISPQFASPTKFKNVLPHETDTQTGQRNRVAEHQHVPKSLLNASVEESHNHPLKEDKSESRQRQVSVSNSNPSSKGMVNKRRSLIQPMMVPTTPETDRTRPQSQSNVASGNSANKNNLHPDTNHGIDINATTQTPSSMSMGNPKFSENFASLAPSSKRNSMHSRTSSSQSMAIDSSLGGSMDVNALLQSLANKELELLECKRKIDDLKKQLHMEENIYQNKANELQELKNKVSKNINVSGSNQPVFNKTSTTGRKNSRESSRRNTHVTPVKTTRNDIRQDTSLNQDMENTDDNKQSMWSKPLALFNQVDQIIQQELERTLNWDEPPTPVEETEENQEGDKSVSKSLWSFVSDLKTGLLGIEEEEDGHHTQQSNSNVNRPKNTHGQVMDNRKHANEDINLSIKEFKTTKKHLDDNSDTHLKQRSGRTAVRKTKSGNKLNFVDDSDDGDSTLEADMVEMGSFSR</sequence>
<gene>
    <name type="primary">TDA11</name>
    <name type="ordered locus">CAGL0I02112g</name>
</gene>
<accession>Q6FR01</accession>
<feature type="chain" id="PRO_0000410755" description="Topoisomerase I damage affected protein 11">
    <location>
        <begin position="1"/>
        <end position="489"/>
    </location>
</feature>
<feature type="region of interest" description="Disordered" evidence="3">
    <location>
        <begin position="1"/>
        <end position="199"/>
    </location>
</feature>
<feature type="region of interest" description="Disordered" evidence="3">
    <location>
        <begin position="263"/>
        <end position="321"/>
    </location>
</feature>
<feature type="region of interest" description="Disordered" evidence="3">
    <location>
        <begin position="344"/>
        <end position="370"/>
    </location>
</feature>
<feature type="region of interest" description="Disordered" evidence="3">
    <location>
        <begin position="391"/>
        <end position="413"/>
    </location>
</feature>
<feature type="region of interest" description="Disordered" evidence="3">
    <location>
        <begin position="439"/>
        <end position="477"/>
    </location>
</feature>
<feature type="coiled-coil region" evidence="2">
    <location>
        <begin position="210"/>
        <end position="266"/>
    </location>
</feature>
<feature type="compositionally biased region" description="Polar residues" evidence="3">
    <location>
        <begin position="19"/>
        <end position="35"/>
    </location>
</feature>
<feature type="compositionally biased region" description="Basic and acidic residues" evidence="3">
    <location>
        <begin position="73"/>
        <end position="89"/>
    </location>
</feature>
<feature type="compositionally biased region" description="Polar residues" evidence="3">
    <location>
        <begin position="90"/>
        <end position="103"/>
    </location>
</feature>
<feature type="compositionally biased region" description="Polar residues" evidence="3">
    <location>
        <begin position="128"/>
        <end position="147"/>
    </location>
</feature>
<feature type="compositionally biased region" description="Polar residues" evidence="3">
    <location>
        <begin position="156"/>
        <end position="167"/>
    </location>
</feature>
<feature type="compositionally biased region" description="Low complexity" evidence="3">
    <location>
        <begin position="182"/>
        <end position="197"/>
    </location>
</feature>
<feature type="compositionally biased region" description="Polar residues" evidence="3">
    <location>
        <begin position="263"/>
        <end position="281"/>
    </location>
</feature>
<feature type="compositionally biased region" description="Polar residues" evidence="3">
    <location>
        <begin position="396"/>
        <end position="411"/>
    </location>
</feature>
<feature type="compositionally biased region" description="Basic residues" evidence="3">
    <location>
        <begin position="447"/>
        <end position="460"/>
    </location>
</feature>
<feature type="compositionally biased region" description="Acidic residues" evidence="3">
    <location>
        <begin position="468"/>
        <end position="477"/>
    </location>
</feature>
<comment type="subcellular location">
    <subcellularLocation>
        <location evidence="1">Cytoplasm</location>
    </subcellularLocation>
</comment>
<comment type="similarity">
    <text evidence="4">Belongs to the TDA11 family.</text>
</comment>
<dbReference type="EMBL" id="CR380955">
    <property type="protein sequence ID" value="CAG60280.1"/>
    <property type="molecule type" value="Genomic_DNA"/>
</dbReference>
<dbReference type="RefSeq" id="XP_447343.1">
    <property type="nucleotide sequence ID" value="XM_447343.1"/>
</dbReference>
<dbReference type="SMR" id="Q6FR01"/>
<dbReference type="FunCoup" id="Q6FR01">
    <property type="interactions" value="16"/>
</dbReference>
<dbReference type="EnsemblFungi" id="CAGL0I02112g-T">
    <property type="protein sequence ID" value="CAGL0I02112g-T-p1"/>
    <property type="gene ID" value="CAGL0I02112g"/>
</dbReference>
<dbReference type="KEGG" id="cgr:2888981"/>
<dbReference type="CGD" id="CAL0132072">
    <property type="gene designation" value="CAGL0I02112g"/>
</dbReference>
<dbReference type="VEuPathDB" id="FungiDB:CAGL0I02112g"/>
<dbReference type="eggNOG" id="ENOG502S2SD">
    <property type="taxonomic scope" value="Eukaryota"/>
</dbReference>
<dbReference type="HOGENOM" id="CLU_046807_0_0_1"/>
<dbReference type="InParanoid" id="Q6FR01"/>
<dbReference type="OMA" id="ERTLNWD"/>
<dbReference type="Proteomes" id="UP000002428">
    <property type="component" value="Chromosome I"/>
</dbReference>
<dbReference type="GO" id="GO:0005737">
    <property type="term" value="C:cytoplasm"/>
    <property type="evidence" value="ECO:0007669"/>
    <property type="project" value="UniProtKB-SubCell"/>
</dbReference>
<dbReference type="InterPro" id="IPR031388">
    <property type="entry name" value="Tda11"/>
</dbReference>
<dbReference type="Pfam" id="PF17084">
    <property type="entry name" value="TDA11"/>
    <property type="match status" value="2"/>
</dbReference>
<evidence type="ECO:0000250" key="1"/>
<evidence type="ECO:0000255" key="2"/>
<evidence type="ECO:0000256" key="3">
    <source>
        <dbReference type="SAM" id="MobiDB-lite"/>
    </source>
</evidence>
<evidence type="ECO:0000305" key="4"/>
<reference key="1">
    <citation type="journal article" date="2004" name="Nature">
        <title>Genome evolution in yeasts.</title>
        <authorList>
            <person name="Dujon B."/>
            <person name="Sherman D."/>
            <person name="Fischer G."/>
            <person name="Durrens P."/>
            <person name="Casaregola S."/>
            <person name="Lafontaine I."/>
            <person name="de Montigny J."/>
            <person name="Marck C."/>
            <person name="Neuveglise C."/>
            <person name="Talla E."/>
            <person name="Goffard N."/>
            <person name="Frangeul L."/>
            <person name="Aigle M."/>
            <person name="Anthouard V."/>
            <person name="Babour A."/>
            <person name="Barbe V."/>
            <person name="Barnay S."/>
            <person name="Blanchin S."/>
            <person name="Beckerich J.-M."/>
            <person name="Beyne E."/>
            <person name="Bleykasten C."/>
            <person name="Boisrame A."/>
            <person name="Boyer J."/>
            <person name="Cattolico L."/>
            <person name="Confanioleri F."/>
            <person name="de Daruvar A."/>
            <person name="Despons L."/>
            <person name="Fabre E."/>
            <person name="Fairhead C."/>
            <person name="Ferry-Dumazet H."/>
            <person name="Groppi A."/>
            <person name="Hantraye F."/>
            <person name="Hennequin C."/>
            <person name="Jauniaux N."/>
            <person name="Joyet P."/>
            <person name="Kachouri R."/>
            <person name="Kerrest A."/>
            <person name="Koszul R."/>
            <person name="Lemaire M."/>
            <person name="Lesur I."/>
            <person name="Ma L."/>
            <person name="Muller H."/>
            <person name="Nicaud J.-M."/>
            <person name="Nikolski M."/>
            <person name="Oztas S."/>
            <person name="Ozier-Kalogeropoulos O."/>
            <person name="Pellenz S."/>
            <person name="Potier S."/>
            <person name="Richard G.-F."/>
            <person name="Straub M.-L."/>
            <person name="Suleau A."/>
            <person name="Swennen D."/>
            <person name="Tekaia F."/>
            <person name="Wesolowski-Louvel M."/>
            <person name="Westhof E."/>
            <person name="Wirth B."/>
            <person name="Zeniou-Meyer M."/>
            <person name="Zivanovic Y."/>
            <person name="Bolotin-Fukuhara M."/>
            <person name="Thierry A."/>
            <person name="Bouchier C."/>
            <person name="Caudron B."/>
            <person name="Scarpelli C."/>
            <person name="Gaillardin C."/>
            <person name="Weissenbach J."/>
            <person name="Wincker P."/>
            <person name="Souciet J.-L."/>
        </authorList>
    </citation>
    <scope>NUCLEOTIDE SEQUENCE [LARGE SCALE GENOMIC DNA]</scope>
    <source>
        <strain>ATCC 2001 / BCRC 20586 / JCM 3761 / NBRC 0622 / NRRL Y-65 / CBS 138</strain>
    </source>
</reference>